<name>TARI_LISMF</name>
<comment type="function">
    <text evidence="1">Catalyzes the transfer of the cytidylyl group of CTP to D-ribitol 5-phosphate.</text>
</comment>
<comment type="catalytic activity">
    <reaction evidence="1">
        <text>D-ribitol 5-phosphate + CTP + H(+) = CDP-L-ribitol + diphosphate</text>
        <dbReference type="Rhea" id="RHEA:12456"/>
        <dbReference type="ChEBI" id="CHEBI:15378"/>
        <dbReference type="ChEBI" id="CHEBI:33019"/>
        <dbReference type="ChEBI" id="CHEBI:37563"/>
        <dbReference type="ChEBI" id="CHEBI:57608"/>
        <dbReference type="ChEBI" id="CHEBI:57695"/>
        <dbReference type="EC" id="2.7.7.40"/>
    </reaction>
</comment>
<comment type="pathway">
    <text evidence="1">Cell wall biogenesis; poly(ribitol phosphate) teichoic acid biosynthesis.</text>
</comment>
<comment type="similarity">
    <text evidence="1">Belongs to the IspD/TarI cytidylyltransferase family. TarI subfamily.</text>
</comment>
<gene>
    <name evidence="1" type="primary">tarI</name>
    <name type="ordered locus">LMOf2365_1100</name>
</gene>
<feature type="chain" id="PRO_0000075586" description="Ribitol-5-phosphate cytidylyltransferase">
    <location>
        <begin position="1"/>
        <end position="237"/>
    </location>
</feature>
<feature type="binding site" evidence="1">
    <location>
        <begin position="7"/>
        <end position="10"/>
    </location>
    <ligand>
        <name>CTP</name>
        <dbReference type="ChEBI" id="CHEBI:37563"/>
    </ligand>
</feature>
<feature type="binding site" evidence="1">
    <location>
        <begin position="80"/>
        <end position="86"/>
    </location>
    <ligand>
        <name>CTP</name>
        <dbReference type="ChEBI" id="CHEBI:37563"/>
    </ligand>
</feature>
<feature type="site" description="Transition state stabilizer" evidence="1">
    <location>
        <position position="14"/>
    </location>
</feature>
<feature type="site" description="Transition state stabilizer" evidence="1">
    <location>
        <position position="22"/>
    </location>
</feature>
<feature type="site" description="Positions ribitol 5-phosphate for the nucleophilic attack" evidence="1">
    <location>
        <position position="159"/>
    </location>
</feature>
<feature type="site" description="Positions ribitol 5-phosphate for the nucleophilic attack" evidence="1">
    <location>
        <position position="216"/>
    </location>
</feature>
<feature type="strand" evidence="2">
    <location>
        <begin position="2"/>
        <end position="7"/>
    </location>
</feature>
<feature type="helix" evidence="2">
    <location>
        <begin position="22"/>
        <end position="24"/>
    </location>
</feature>
<feature type="strand" evidence="2">
    <location>
        <begin position="25"/>
        <end position="27"/>
    </location>
</feature>
<feature type="helix" evidence="2">
    <location>
        <begin position="32"/>
        <end position="41"/>
    </location>
</feature>
<feature type="strand" evidence="2">
    <location>
        <begin position="47"/>
        <end position="53"/>
    </location>
</feature>
<feature type="helix" evidence="2">
    <location>
        <begin position="55"/>
        <end position="57"/>
    </location>
</feature>
<feature type="helix" evidence="2">
    <location>
        <begin position="58"/>
        <end position="68"/>
    </location>
</feature>
<feature type="strand" evidence="2">
    <location>
        <begin position="74"/>
        <end position="78"/>
    </location>
</feature>
<feature type="helix" evidence="2">
    <location>
        <begin position="83"/>
        <end position="97"/>
    </location>
</feature>
<feature type="strand" evidence="2">
    <location>
        <begin position="105"/>
        <end position="110"/>
    </location>
</feature>
<feature type="helix" evidence="2">
    <location>
        <begin position="118"/>
        <end position="130"/>
    </location>
</feature>
<feature type="strand" evidence="2">
    <location>
        <begin position="132"/>
        <end position="139"/>
    </location>
</feature>
<feature type="strand" evidence="2">
    <location>
        <begin position="144"/>
        <end position="146"/>
    </location>
</feature>
<feature type="strand" evidence="2">
    <location>
        <begin position="148"/>
        <end position="152"/>
    </location>
</feature>
<feature type="helix" evidence="2">
    <location>
        <begin position="159"/>
        <end position="161"/>
    </location>
</feature>
<feature type="strand" evidence="2">
    <location>
        <begin position="162"/>
        <end position="172"/>
    </location>
</feature>
<feature type="helix" evidence="2">
    <location>
        <begin position="173"/>
        <end position="181"/>
    </location>
</feature>
<feature type="helix" evidence="2">
    <location>
        <begin position="185"/>
        <end position="190"/>
    </location>
</feature>
<feature type="helix" evidence="2">
    <location>
        <begin position="194"/>
        <end position="200"/>
    </location>
</feature>
<feature type="strand" evidence="2">
    <location>
        <begin position="206"/>
        <end position="209"/>
    </location>
</feature>
<feature type="helix" evidence="2">
    <location>
        <begin position="220"/>
        <end position="233"/>
    </location>
</feature>
<accession>Q720Y7</accession>
<dbReference type="EC" id="2.7.7.40" evidence="1"/>
<dbReference type="EMBL" id="AE017262">
    <property type="protein sequence ID" value="AAT03877.1"/>
    <property type="molecule type" value="Genomic_DNA"/>
</dbReference>
<dbReference type="RefSeq" id="WP_003724626.1">
    <property type="nucleotide sequence ID" value="NC_002973.6"/>
</dbReference>
<dbReference type="PDB" id="3F1C">
    <property type="method" value="X-ray"/>
    <property type="resolution" value="2.30 A"/>
    <property type="chains" value="A/B=2-236"/>
</dbReference>
<dbReference type="PDBsum" id="3F1C"/>
<dbReference type="SMR" id="Q720Y7"/>
<dbReference type="DNASU" id="2799328"/>
<dbReference type="KEGG" id="lmf:LMOf2365_1100"/>
<dbReference type="HOGENOM" id="CLU_061281_2_3_9"/>
<dbReference type="UniPathway" id="UPA00790"/>
<dbReference type="EvolutionaryTrace" id="Q720Y7"/>
<dbReference type="GO" id="GO:0050518">
    <property type="term" value="F:2-C-methyl-D-erythritol 4-phosphate cytidylyltransferase activity"/>
    <property type="evidence" value="ECO:0007669"/>
    <property type="project" value="TreeGrafter"/>
</dbReference>
<dbReference type="GO" id="GO:0047349">
    <property type="term" value="F:D-ribitol-5-phosphate cytidylyltransferase activity"/>
    <property type="evidence" value="ECO:0007669"/>
    <property type="project" value="UniProtKB-UniRule"/>
</dbReference>
<dbReference type="GO" id="GO:0071555">
    <property type="term" value="P:cell wall organization"/>
    <property type="evidence" value="ECO:0007669"/>
    <property type="project" value="UniProtKB-KW"/>
</dbReference>
<dbReference type="GO" id="GO:0008299">
    <property type="term" value="P:isoprenoid biosynthetic process"/>
    <property type="evidence" value="ECO:0007669"/>
    <property type="project" value="InterPro"/>
</dbReference>
<dbReference type="GO" id="GO:1902012">
    <property type="term" value="P:poly(ribitol phosphate) teichoic acid biosynthetic process"/>
    <property type="evidence" value="ECO:0007669"/>
    <property type="project" value="UniProtKB-UniRule"/>
</dbReference>
<dbReference type="CDD" id="cd02516">
    <property type="entry name" value="CDP-ME_synthetase"/>
    <property type="match status" value="1"/>
</dbReference>
<dbReference type="FunFam" id="3.90.550.10:FF:000003">
    <property type="entry name" value="2-C-methyl-D-erythritol 4-phosphate cytidylyltransferase"/>
    <property type="match status" value="1"/>
</dbReference>
<dbReference type="Gene3D" id="3.90.550.10">
    <property type="entry name" value="Spore Coat Polysaccharide Biosynthesis Protein SpsA, Chain A"/>
    <property type="match status" value="1"/>
</dbReference>
<dbReference type="HAMAP" id="MF_02068">
    <property type="entry name" value="TarI"/>
    <property type="match status" value="1"/>
</dbReference>
<dbReference type="InterPro" id="IPR034683">
    <property type="entry name" value="IspD/TarI"/>
</dbReference>
<dbReference type="InterPro" id="IPR050088">
    <property type="entry name" value="IspD/TarI_cytidylyltransf_bact"/>
</dbReference>
<dbReference type="InterPro" id="IPR018294">
    <property type="entry name" value="ISPD_synthase_CS"/>
</dbReference>
<dbReference type="InterPro" id="IPR029044">
    <property type="entry name" value="Nucleotide-diphossugar_trans"/>
</dbReference>
<dbReference type="InterPro" id="IPR034709">
    <property type="entry name" value="TarI"/>
</dbReference>
<dbReference type="NCBIfam" id="NF001183">
    <property type="entry name" value="PRK00155.1-3"/>
    <property type="match status" value="1"/>
</dbReference>
<dbReference type="PANTHER" id="PTHR32125">
    <property type="entry name" value="2-C-METHYL-D-ERYTHRITOL 4-PHOSPHATE CYTIDYLYLTRANSFERASE, CHLOROPLASTIC"/>
    <property type="match status" value="1"/>
</dbReference>
<dbReference type="PANTHER" id="PTHR32125:SF8">
    <property type="entry name" value="RIBITOL-5-PHOSPHATE CYTIDYLYLTRANSFERASE"/>
    <property type="match status" value="1"/>
</dbReference>
<dbReference type="Pfam" id="PF01128">
    <property type="entry name" value="IspD"/>
    <property type="match status" value="1"/>
</dbReference>
<dbReference type="SUPFAM" id="SSF53448">
    <property type="entry name" value="Nucleotide-diphospho-sugar transferases"/>
    <property type="match status" value="1"/>
</dbReference>
<dbReference type="PROSITE" id="PS01295">
    <property type="entry name" value="ISPD"/>
    <property type="match status" value="1"/>
</dbReference>
<keyword id="KW-0002">3D-structure</keyword>
<keyword id="KW-0961">Cell wall biogenesis/degradation</keyword>
<keyword id="KW-0548">Nucleotidyltransferase</keyword>
<keyword id="KW-0777">Teichoic acid biosynthesis</keyword>
<keyword id="KW-0808">Transferase</keyword>
<sequence>MIYAQILAGGKGTRMGNVSMPKQFLPLNGKPIIVHTVEKFILNTRFDKILISSPKEWMNHAEDNIKKYISDDRIVVIEGGEDRNETIMNGIRFVEKTYGLTDDDIIVTHDAVRPFLTHRIIEENIDAALETGAVDTVIEALDTIVESSNHEVITDIPVRDHMYQGQTPQSFNMKKVFNHYQNLTPEKKQILTDACKICLLAGDDVKLVKGEIFNIKITTPYDLKVANAIIQERIAND</sequence>
<organism>
    <name type="scientific">Listeria monocytogenes serotype 4b (strain F2365)</name>
    <dbReference type="NCBI Taxonomy" id="265669"/>
    <lineage>
        <taxon>Bacteria</taxon>
        <taxon>Bacillati</taxon>
        <taxon>Bacillota</taxon>
        <taxon>Bacilli</taxon>
        <taxon>Bacillales</taxon>
        <taxon>Listeriaceae</taxon>
        <taxon>Listeria</taxon>
    </lineage>
</organism>
<proteinExistence type="evidence at protein level"/>
<evidence type="ECO:0000255" key="1">
    <source>
        <dbReference type="HAMAP-Rule" id="MF_02068"/>
    </source>
</evidence>
<evidence type="ECO:0007829" key="2">
    <source>
        <dbReference type="PDB" id="3F1C"/>
    </source>
</evidence>
<protein>
    <recommendedName>
        <fullName evidence="1">Ribitol-5-phosphate cytidylyltransferase</fullName>
        <ecNumber evidence="1">2.7.7.40</ecNumber>
    </recommendedName>
</protein>
<reference key="1">
    <citation type="journal article" date="2004" name="Nucleic Acids Res.">
        <title>Whole genome comparisons of serotype 4b and 1/2a strains of the food-borne pathogen Listeria monocytogenes reveal new insights into the core genome components of this species.</title>
        <authorList>
            <person name="Nelson K.E."/>
            <person name="Fouts D.E."/>
            <person name="Mongodin E.F."/>
            <person name="Ravel J."/>
            <person name="DeBoy R.T."/>
            <person name="Kolonay J.F."/>
            <person name="Rasko D.A."/>
            <person name="Angiuoli S.V."/>
            <person name="Gill S.R."/>
            <person name="Paulsen I.T."/>
            <person name="Peterson J.D."/>
            <person name="White O."/>
            <person name="Nelson W.C."/>
            <person name="Nierman W.C."/>
            <person name="Beanan M.J."/>
            <person name="Brinkac L.M."/>
            <person name="Daugherty S.C."/>
            <person name="Dodson R.J."/>
            <person name="Durkin A.S."/>
            <person name="Madupu R."/>
            <person name="Haft D.H."/>
            <person name="Selengut J."/>
            <person name="Van Aken S.E."/>
            <person name="Khouri H.M."/>
            <person name="Fedorova N."/>
            <person name="Forberger H.A."/>
            <person name="Tran B."/>
            <person name="Kathariou S."/>
            <person name="Wonderling L.D."/>
            <person name="Uhlich G.A."/>
            <person name="Bayles D.O."/>
            <person name="Luchansky J.B."/>
            <person name="Fraser C.M."/>
        </authorList>
    </citation>
    <scope>NUCLEOTIDE SEQUENCE [LARGE SCALE GENOMIC DNA]</scope>
    <source>
        <strain>F2365</strain>
    </source>
</reference>